<dbReference type="EMBL" id="CR382129">
    <property type="protein sequence ID" value="CAG82445.1"/>
    <property type="molecule type" value="Genomic_DNA"/>
</dbReference>
<dbReference type="RefSeq" id="XP_502125.1">
    <property type="nucleotide sequence ID" value="XM_502125.1"/>
</dbReference>
<dbReference type="FunCoup" id="Q6CB37">
    <property type="interactions" value="17"/>
</dbReference>
<dbReference type="STRING" id="284591.Q6CB37"/>
<dbReference type="EnsemblFungi" id="CAG82445">
    <property type="protein sequence ID" value="CAG82445"/>
    <property type="gene ID" value="YALI0_C22187g"/>
</dbReference>
<dbReference type="KEGG" id="yli:2909688"/>
<dbReference type="VEuPathDB" id="FungiDB:YALI0_C22187g"/>
<dbReference type="HOGENOM" id="CLU_837311_0_0_1"/>
<dbReference type="InParanoid" id="Q6CB37"/>
<dbReference type="OrthoDB" id="127021at4891"/>
<dbReference type="Proteomes" id="UP000001300">
    <property type="component" value="Chromosome C"/>
</dbReference>
<dbReference type="GO" id="GO:0005789">
    <property type="term" value="C:endoplasmic reticulum membrane"/>
    <property type="evidence" value="ECO:0000318"/>
    <property type="project" value="GO_Central"/>
</dbReference>
<dbReference type="GO" id="GO:0071555">
    <property type="term" value="P:cell wall organization"/>
    <property type="evidence" value="ECO:0007669"/>
    <property type="project" value="UniProtKB-KW"/>
</dbReference>
<dbReference type="InterPro" id="IPR037654">
    <property type="entry name" value="Big1"/>
</dbReference>
<dbReference type="PANTHER" id="PTHR28285">
    <property type="entry name" value="PROTEIN BIG1"/>
    <property type="match status" value="1"/>
</dbReference>
<dbReference type="PANTHER" id="PTHR28285:SF1">
    <property type="entry name" value="PROTEIN BIG1"/>
    <property type="match status" value="1"/>
</dbReference>
<protein>
    <recommendedName>
        <fullName>Protein BIG1</fullName>
    </recommendedName>
</protein>
<feature type="signal peptide" evidence="2">
    <location>
        <begin position="1"/>
        <end position="14"/>
    </location>
</feature>
<feature type="chain" id="PRO_0000277853" description="Protein BIG1">
    <location>
        <begin position="15"/>
        <end position="332"/>
    </location>
</feature>
<feature type="topological domain" description="Lumenal" evidence="2">
    <location>
        <begin position="15"/>
        <end position="266"/>
    </location>
</feature>
<feature type="transmembrane region" description="Helical" evidence="2">
    <location>
        <begin position="267"/>
        <end position="287"/>
    </location>
</feature>
<feature type="topological domain" description="Cytoplasmic" evidence="2">
    <location>
        <begin position="288"/>
        <end position="332"/>
    </location>
</feature>
<comment type="function">
    <text evidence="1">Required for normal beta-1,6-glucan synthesis.</text>
</comment>
<comment type="subcellular location">
    <subcellularLocation>
        <location evidence="1">Endoplasmic reticulum membrane</location>
        <topology evidence="1">Single-pass type I membrane protein</topology>
    </subcellularLocation>
</comment>
<comment type="similarity">
    <text evidence="3">Belongs to the BIG1 family.</text>
</comment>
<keyword id="KW-0961">Cell wall biogenesis/degradation</keyword>
<keyword id="KW-0256">Endoplasmic reticulum</keyword>
<keyword id="KW-0472">Membrane</keyword>
<keyword id="KW-1185">Reference proteome</keyword>
<keyword id="KW-0732">Signal</keyword>
<keyword id="KW-0812">Transmembrane</keyword>
<keyword id="KW-1133">Transmembrane helix</keyword>
<name>BIG1_YARLI</name>
<organism>
    <name type="scientific">Yarrowia lipolytica (strain CLIB 122 / E 150)</name>
    <name type="common">Yeast</name>
    <name type="synonym">Candida lipolytica</name>
    <dbReference type="NCBI Taxonomy" id="284591"/>
    <lineage>
        <taxon>Eukaryota</taxon>
        <taxon>Fungi</taxon>
        <taxon>Dikarya</taxon>
        <taxon>Ascomycota</taxon>
        <taxon>Saccharomycotina</taxon>
        <taxon>Dipodascomycetes</taxon>
        <taxon>Dipodascales</taxon>
        <taxon>Dipodascales incertae sedis</taxon>
        <taxon>Yarrowia</taxon>
    </lineage>
</organism>
<evidence type="ECO:0000250" key="1"/>
<evidence type="ECO:0000255" key="2"/>
<evidence type="ECO:0000305" key="3"/>
<accession>Q6CB37</accession>
<proteinExistence type="inferred from homology"/>
<sequence length="332" mass="36711">MKLALLSLIGTALATPAVMLSHKELTAFEKYTNKQTSNSISAVELDRVARKLMHDCSANTYVVVNQPGLKAKDFQTESAFPFLKKLLERTSTMYTVPYADGGIELGKLANSVAKQCGAVKIDVNLDNNITPLEEYMDTTKRVIEINFEPLPNTYVSRLAALAANDEMLEKIVRATPSPFIALILTSQKGEEGDFETRNPDFKIFPGVARAKTVPGAKDKYKYHMELQNVPVDEKKLTAEALLKVKTPPTHAPEVRQTGDGELVDDKLLLMIVGSVVAILLSLLVFNGLMAAKPDVVKVDKTDAKVEKAVKKEVQKKERLVNGRVEQLKRETR</sequence>
<reference key="1">
    <citation type="journal article" date="2004" name="Nature">
        <title>Genome evolution in yeasts.</title>
        <authorList>
            <person name="Dujon B."/>
            <person name="Sherman D."/>
            <person name="Fischer G."/>
            <person name="Durrens P."/>
            <person name="Casaregola S."/>
            <person name="Lafontaine I."/>
            <person name="de Montigny J."/>
            <person name="Marck C."/>
            <person name="Neuveglise C."/>
            <person name="Talla E."/>
            <person name="Goffard N."/>
            <person name="Frangeul L."/>
            <person name="Aigle M."/>
            <person name="Anthouard V."/>
            <person name="Babour A."/>
            <person name="Barbe V."/>
            <person name="Barnay S."/>
            <person name="Blanchin S."/>
            <person name="Beckerich J.-M."/>
            <person name="Beyne E."/>
            <person name="Bleykasten C."/>
            <person name="Boisrame A."/>
            <person name="Boyer J."/>
            <person name="Cattolico L."/>
            <person name="Confanioleri F."/>
            <person name="de Daruvar A."/>
            <person name="Despons L."/>
            <person name="Fabre E."/>
            <person name="Fairhead C."/>
            <person name="Ferry-Dumazet H."/>
            <person name="Groppi A."/>
            <person name="Hantraye F."/>
            <person name="Hennequin C."/>
            <person name="Jauniaux N."/>
            <person name="Joyet P."/>
            <person name="Kachouri R."/>
            <person name="Kerrest A."/>
            <person name="Koszul R."/>
            <person name="Lemaire M."/>
            <person name="Lesur I."/>
            <person name="Ma L."/>
            <person name="Muller H."/>
            <person name="Nicaud J.-M."/>
            <person name="Nikolski M."/>
            <person name="Oztas S."/>
            <person name="Ozier-Kalogeropoulos O."/>
            <person name="Pellenz S."/>
            <person name="Potier S."/>
            <person name="Richard G.-F."/>
            <person name="Straub M.-L."/>
            <person name="Suleau A."/>
            <person name="Swennen D."/>
            <person name="Tekaia F."/>
            <person name="Wesolowski-Louvel M."/>
            <person name="Westhof E."/>
            <person name="Wirth B."/>
            <person name="Zeniou-Meyer M."/>
            <person name="Zivanovic Y."/>
            <person name="Bolotin-Fukuhara M."/>
            <person name="Thierry A."/>
            <person name="Bouchier C."/>
            <person name="Caudron B."/>
            <person name="Scarpelli C."/>
            <person name="Gaillardin C."/>
            <person name="Weissenbach J."/>
            <person name="Wincker P."/>
            <person name="Souciet J.-L."/>
        </authorList>
    </citation>
    <scope>NUCLEOTIDE SEQUENCE [LARGE SCALE GENOMIC DNA]</scope>
    <source>
        <strain>CLIB 122 / E 150</strain>
    </source>
</reference>
<gene>
    <name type="primary">BIG1</name>
    <name type="ordered locus">YALI0C22187g</name>
</gene>